<proteinExistence type="evidence at protein level"/>
<protein>
    <recommendedName>
        <fullName>Sperm-associated antigen 4 protein</fullName>
    </recommendedName>
    <alternativeName>
        <fullName>Outer dense fiber-associated protein SPAG4</fullName>
    </alternativeName>
    <alternativeName>
        <fullName>SUN domain-containing protein 4</fullName>
    </alternativeName>
</protein>
<accession>O55034</accession>
<dbReference type="EMBL" id="AF043345">
    <property type="protein sequence ID" value="AAC32053.2"/>
    <property type="molecule type" value="mRNA"/>
</dbReference>
<dbReference type="RefSeq" id="NP_113980.1">
    <property type="nucleotide sequence ID" value="NM_031792.1"/>
</dbReference>
<dbReference type="SMR" id="O55034"/>
<dbReference type="FunCoup" id="O55034">
    <property type="interactions" value="27"/>
</dbReference>
<dbReference type="STRING" id="10116.ENSRNOP00000026578"/>
<dbReference type="GlyGen" id="O55034">
    <property type="glycosylation" value="1 site"/>
</dbReference>
<dbReference type="PhosphoSitePlus" id="O55034"/>
<dbReference type="PaxDb" id="10116-ENSRNOP00000026578"/>
<dbReference type="GeneID" id="83623"/>
<dbReference type="KEGG" id="rno:83623"/>
<dbReference type="UCSC" id="RGD:620151">
    <property type="organism name" value="rat"/>
</dbReference>
<dbReference type="AGR" id="RGD:620151"/>
<dbReference type="CTD" id="6676"/>
<dbReference type="RGD" id="620151">
    <property type="gene designation" value="Spag4"/>
</dbReference>
<dbReference type="eggNOG" id="KOG2687">
    <property type="taxonomic scope" value="Eukaryota"/>
</dbReference>
<dbReference type="InParanoid" id="O55034"/>
<dbReference type="PhylomeDB" id="O55034"/>
<dbReference type="PRO" id="PR:O55034"/>
<dbReference type="Proteomes" id="UP000002494">
    <property type="component" value="Unplaced"/>
</dbReference>
<dbReference type="GO" id="GO:0005737">
    <property type="term" value="C:cytoplasm"/>
    <property type="evidence" value="ECO:0007669"/>
    <property type="project" value="UniProtKB-KW"/>
</dbReference>
<dbReference type="GO" id="GO:0034993">
    <property type="term" value="C:meiotic nuclear membrane microtubule tethering complex"/>
    <property type="evidence" value="ECO:0000318"/>
    <property type="project" value="GO_Central"/>
</dbReference>
<dbReference type="GO" id="GO:0005874">
    <property type="term" value="C:microtubule"/>
    <property type="evidence" value="ECO:0000314"/>
    <property type="project" value="RGD"/>
</dbReference>
<dbReference type="GO" id="GO:0031514">
    <property type="term" value="C:motile cilium"/>
    <property type="evidence" value="ECO:0007669"/>
    <property type="project" value="UniProtKB-KW"/>
</dbReference>
<dbReference type="GO" id="GO:0005635">
    <property type="term" value="C:nuclear envelope"/>
    <property type="evidence" value="ECO:0000318"/>
    <property type="project" value="GO_Central"/>
</dbReference>
<dbReference type="GO" id="GO:0005637">
    <property type="term" value="C:nuclear inner membrane"/>
    <property type="evidence" value="ECO:0007669"/>
    <property type="project" value="UniProtKB-SubCell"/>
</dbReference>
<dbReference type="GO" id="GO:0042802">
    <property type="term" value="F:identical protein binding"/>
    <property type="evidence" value="ECO:0000314"/>
    <property type="project" value="RGD"/>
</dbReference>
<dbReference type="GO" id="GO:0043495">
    <property type="term" value="F:protein-membrane adaptor activity"/>
    <property type="evidence" value="ECO:0000318"/>
    <property type="project" value="GO_Central"/>
</dbReference>
<dbReference type="GO" id="GO:0030154">
    <property type="term" value="P:cell differentiation"/>
    <property type="evidence" value="ECO:0007669"/>
    <property type="project" value="UniProtKB-KW"/>
</dbReference>
<dbReference type="GO" id="GO:0007283">
    <property type="term" value="P:spermatogenesis"/>
    <property type="evidence" value="ECO:0007669"/>
    <property type="project" value="UniProtKB-KW"/>
</dbReference>
<dbReference type="FunFam" id="2.60.120.260:FF:000032">
    <property type="entry name" value="Sperm associated antigen 4 (Predicted)"/>
    <property type="match status" value="1"/>
</dbReference>
<dbReference type="Gene3D" id="2.60.120.260">
    <property type="entry name" value="Galactose-binding domain-like"/>
    <property type="match status" value="1"/>
</dbReference>
<dbReference type="InterPro" id="IPR045119">
    <property type="entry name" value="SUN1-5"/>
</dbReference>
<dbReference type="InterPro" id="IPR012919">
    <property type="entry name" value="SUN_dom"/>
</dbReference>
<dbReference type="PANTHER" id="PTHR12911">
    <property type="entry name" value="SAD1/UNC-84-LIKE PROTEIN-RELATED"/>
    <property type="match status" value="1"/>
</dbReference>
<dbReference type="PANTHER" id="PTHR12911:SF16">
    <property type="entry name" value="SPERM-ASSOCIATED ANTIGEN 4 PROTEIN"/>
    <property type="match status" value="1"/>
</dbReference>
<dbReference type="Pfam" id="PF07738">
    <property type="entry name" value="Sad1_UNC"/>
    <property type="match status" value="1"/>
</dbReference>
<dbReference type="PROSITE" id="PS51469">
    <property type="entry name" value="SUN"/>
    <property type="match status" value="1"/>
</dbReference>
<name>SPAG4_RAT</name>
<gene>
    <name type="primary">Spag4</name>
    <name type="synonym">Sun4</name>
</gene>
<organism>
    <name type="scientific">Rattus norvegicus</name>
    <name type="common">Rat</name>
    <dbReference type="NCBI Taxonomy" id="10116"/>
    <lineage>
        <taxon>Eukaryota</taxon>
        <taxon>Metazoa</taxon>
        <taxon>Chordata</taxon>
        <taxon>Craniata</taxon>
        <taxon>Vertebrata</taxon>
        <taxon>Euteleostomi</taxon>
        <taxon>Mammalia</taxon>
        <taxon>Eutheria</taxon>
        <taxon>Euarchontoglires</taxon>
        <taxon>Glires</taxon>
        <taxon>Rodentia</taxon>
        <taxon>Myomorpha</taxon>
        <taxon>Muroidea</taxon>
        <taxon>Muridae</taxon>
        <taxon>Murinae</taxon>
        <taxon>Rattus</taxon>
    </lineage>
</organism>
<keyword id="KW-0966">Cell projection</keyword>
<keyword id="KW-0969">Cilium</keyword>
<keyword id="KW-0175">Coiled coil</keyword>
<keyword id="KW-0963">Cytoplasm</keyword>
<keyword id="KW-0206">Cytoskeleton</keyword>
<keyword id="KW-0221">Differentiation</keyword>
<keyword id="KW-0282">Flagellum</keyword>
<keyword id="KW-0472">Membrane</keyword>
<keyword id="KW-0539">Nucleus</keyword>
<keyword id="KW-1185">Reference proteome</keyword>
<keyword id="KW-0744">Spermatogenesis</keyword>
<keyword id="KW-0812">Transmembrane</keyword>
<keyword id="KW-1133">Transmembrane helix</keyword>
<reference key="1">
    <citation type="journal article" date="1999" name="Dev. Biol.">
        <title>Spag4, a novel sperm protein, binds outer dense-fiber protein Odf1 and localizes to microtubules of manchette and axoneme.</title>
        <authorList>
            <person name="Shao X."/>
            <person name="Tarnasky H.A."/>
            <person name="Lee J.P."/>
            <person name="Oko R."/>
            <person name="van der Hoorn F.A."/>
        </authorList>
    </citation>
    <scope>NUCLEOTIDE SEQUENCE [MRNA]</scope>
    <scope>CHARACTERIZATION</scope>
    <scope>DEVELOPMENTAL STAGE</scope>
    <scope>HOMODIMERIZATION</scope>
    <scope>INTERACTION WITH ODF1</scope>
    <source>
        <tissue>Testis</tissue>
    </source>
</reference>
<comment type="function">
    <text evidence="1 8">Involved in spermatogenesis. Required for sperm head formation but not required to establish and maintain general polarity of the sperm head. Required for anchoring and organization of the manchette. Required for targeting of SUN3 and probably SYNE1 through a probable SUN1:SYNE3 LINC complex to the nuclear envelope and involved in accurate posterior sperm head localization of the complex. May anchor SUN3 the nuclear envelope. Involved in maintenance of the nuclear envelope integrity (By similarity). May assist the organization and assembly of outer dense fibers (ODFs), a specific structure of the sperm tail (PubMed:10373309).</text>
</comment>
<comment type="subunit">
    <text evidence="1 2 6">Self-associates. Interacts with ODF1. May associate with microtubules (PubMed:10373309). Interacts with SUN3 and SYNE1; suggesting the formation of a LINC complexs; a SUN domain-based heterotrimer of SPAG4 and SUN3 may associate with SYNE1 (By similarity). Interacts with SEPT12 and LMNB1; during spermatogenesis (By similarity).</text>
</comment>
<comment type="subcellular location">
    <subcellularLocation>
        <location evidence="7">Membrane</location>
        <topology evidence="7">Multi-pass membrane protein</topology>
    </subcellularLocation>
    <subcellularLocation>
        <location evidence="6">Cytoplasm</location>
        <location evidence="6">Cytoskeleton</location>
    </subcellularLocation>
    <subcellularLocation>
        <location evidence="6">Cytoplasm</location>
        <location evidence="6">Cytoskeleton</location>
        <location evidence="6">Flagellum axoneme</location>
    </subcellularLocation>
    <subcellularLocation>
        <location evidence="1">Nucleus envelope</location>
    </subcellularLocation>
    <subcellularLocation>
        <location evidence="1">Nucleus inner membrane</location>
    </subcellularLocation>
    <text evidence="6">In spermatids, it is localized in the transient manchette and in the axoneme of elongating spermatids and epididymal sperm.</text>
</comment>
<comment type="tissue specificity">
    <text>Testis specific. Exclusively expressed in spermatids.</text>
</comment>
<comment type="developmental stage">
    <text evidence="6">Exclusively expressed in spermatids. Not present in mature sperm. Localized with both the manchette and the axoneme in step 10-11 spermatids. Detected on manchette microtubules of step 12 spermatids. Associates with the tail in steps 18-19 spermatids and epididymal sperm.</text>
</comment>
<comment type="caution">
    <text evidence="7">Although transmembrane domains are strongly predicted, they may rather represent hydrophobic globular domains associated with microtubules.</text>
</comment>
<sequence>MRRNPRPGSAASSHNHTPNFYSENSNSSHSATSGDSNGRRSAGPELGEPDGRMARGSSCGEPALSSGVPGGDTWAGSSRPKLAPRSHNGQTACGAATVRGGASEPSGSPAVLEEQLNLLPILDLRQEMPPPPVSKSFLSLFFQVLSVFLSLVADGLVCVYREICSIRFLFTAVSLLSIFLAALWWGLLYLIPPLENEPKEMLTLSQYHHRVHSQGQQLQQLQAELSKLHKEVTSVRAAHSERVAKLVFQRLNEDFVRKPDYALSSVGASIDLEKTSSDYEDRNTAYFWNRLSFWNYARPPSVILEPDVFPGNCWAFEGEQGQVVIRLPGHVQLSDITLQHPPPTVAHTGGASSAPRDFAVFGLQADDDETEVFLGKFIFEVQKSEIQTFHLQNDPPSAFPKVKIQILSNWGHPRFTCLYRVRAHGVRISESAEDNAMGVTGGPH</sequence>
<evidence type="ECO:0000250" key="1">
    <source>
        <dbReference type="UniProtKB" id="Q9JJF2"/>
    </source>
</evidence>
<evidence type="ECO:0000250" key="2">
    <source>
        <dbReference type="UniProtKB" id="Q9NPE6"/>
    </source>
</evidence>
<evidence type="ECO:0000255" key="3"/>
<evidence type="ECO:0000255" key="4">
    <source>
        <dbReference type="PROSITE-ProRule" id="PRU00802"/>
    </source>
</evidence>
<evidence type="ECO:0000256" key="5">
    <source>
        <dbReference type="SAM" id="MobiDB-lite"/>
    </source>
</evidence>
<evidence type="ECO:0000269" key="6">
    <source>
    </source>
</evidence>
<evidence type="ECO:0000305" key="7"/>
<evidence type="ECO:0000305" key="8">
    <source>
    </source>
</evidence>
<feature type="chain" id="PRO_0000218918" description="Sperm-associated antigen 4 protein">
    <location>
        <begin position="1"/>
        <end position="444"/>
    </location>
</feature>
<feature type="transmembrane region" description="Helical" evidence="3">
    <location>
        <begin position="137"/>
        <end position="159"/>
    </location>
</feature>
<feature type="transmembrane region" description="Helical" evidence="3">
    <location>
        <begin position="166"/>
        <end position="188"/>
    </location>
</feature>
<feature type="domain" description="SUN" evidence="4">
    <location>
        <begin position="267"/>
        <end position="428"/>
    </location>
</feature>
<feature type="region of interest" description="Disordered" evidence="5">
    <location>
        <begin position="1"/>
        <end position="109"/>
    </location>
</feature>
<feature type="coiled-coil region" evidence="3">
    <location>
        <begin position="204"/>
        <end position="241"/>
    </location>
</feature>
<feature type="compositionally biased region" description="Low complexity" evidence="5">
    <location>
        <begin position="19"/>
        <end position="36"/>
    </location>
</feature>